<evidence type="ECO:0000255" key="1">
    <source>
        <dbReference type="HAMAP-Rule" id="MF_01224"/>
    </source>
</evidence>
<keyword id="KW-0456">Lyase</keyword>
<keyword id="KW-0501">Molybdenum cofactor biosynthesis</keyword>
<dbReference type="EC" id="4.6.1.17" evidence="1"/>
<dbReference type="EMBL" id="CU928158">
    <property type="protein sequence ID" value="CAQ89829.1"/>
    <property type="molecule type" value="Genomic_DNA"/>
</dbReference>
<dbReference type="RefSeq" id="WP_000080885.1">
    <property type="nucleotide sequence ID" value="NC_011740.1"/>
</dbReference>
<dbReference type="SMR" id="B7LJX9"/>
<dbReference type="GeneID" id="86945666"/>
<dbReference type="KEGG" id="efe:EFER_2328"/>
<dbReference type="HOGENOM" id="CLU_074693_1_1_6"/>
<dbReference type="OrthoDB" id="9794429at2"/>
<dbReference type="UniPathway" id="UPA00344"/>
<dbReference type="Proteomes" id="UP000000745">
    <property type="component" value="Chromosome"/>
</dbReference>
<dbReference type="GO" id="GO:0061799">
    <property type="term" value="F:cyclic pyranopterin monophosphate synthase activity"/>
    <property type="evidence" value="ECO:0007669"/>
    <property type="project" value="UniProtKB-UniRule"/>
</dbReference>
<dbReference type="GO" id="GO:0006777">
    <property type="term" value="P:Mo-molybdopterin cofactor biosynthetic process"/>
    <property type="evidence" value="ECO:0007669"/>
    <property type="project" value="UniProtKB-UniRule"/>
</dbReference>
<dbReference type="CDD" id="cd01420">
    <property type="entry name" value="MoaC_PE"/>
    <property type="match status" value="1"/>
</dbReference>
<dbReference type="FunFam" id="3.30.70.640:FF:000001">
    <property type="entry name" value="Cyclic pyranopterin monophosphate synthase"/>
    <property type="match status" value="1"/>
</dbReference>
<dbReference type="Gene3D" id="3.30.70.640">
    <property type="entry name" value="Molybdopterin cofactor biosynthesis C (MoaC) domain"/>
    <property type="match status" value="1"/>
</dbReference>
<dbReference type="HAMAP" id="MF_01224_B">
    <property type="entry name" value="MoaC_B"/>
    <property type="match status" value="1"/>
</dbReference>
<dbReference type="InterPro" id="IPR023045">
    <property type="entry name" value="MoaC"/>
</dbReference>
<dbReference type="InterPro" id="IPR047594">
    <property type="entry name" value="MoaC_bact/euk"/>
</dbReference>
<dbReference type="InterPro" id="IPR036522">
    <property type="entry name" value="MoaC_sf"/>
</dbReference>
<dbReference type="InterPro" id="IPR050105">
    <property type="entry name" value="MoCo_biosynth_MoaA/MoaC"/>
</dbReference>
<dbReference type="InterPro" id="IPR002820">
    <property type="entry name" value="Mopterin_CF_biosynth-C_dom"/>
</dbReference>
<dbReference type="NCBIfam" id="TIGR00581">
    <property type="entry name" value="moaC"/>
    <property type="match status" value="1"/>
</dbReference>
<dbReference type="NCBIfam" id="NF006870">
    <property type="entry name" value="PRK09364.1"/>
    <property type="match status" value="1"/>
</dbReference>
<dbReference type="PANTHER" id="PTHR22960">
    <property type="entry name" value="MOLYBDOPTERIN COFACTOR SYNTHESIS PROTEIN A"/>
    <property type="match status" value="1"/>
</dbReference>
<dbReference type="Pfam" id="PF01967">
    <property type="entry name" value="MoaC"/>
    <property type="match status" value="1"/>
</dbReference>
<dbReference type="SUPFAM" id="SSF55040">
    <property type="entry name" value="Molybdenum cofactor biosynthesis protein C, MoaC"/>
    <property type="match status" value="1"/>
</dbReference>
<protein>
    <recommendedName>
        <fullName evidence="1">Cyclic pyranopterin monophosphate synthase</fullName>
        <ecNumber evidence="1">4.6.1.17</ecNumber>
    </recommendedName>
    <alternativeName>
        <fullName evidence="1">Molybdenum cofactor biosynthesis protein C</fullName>
    </alternativeName>
</protein>
<name>MOAC_ESCF3</name>
<reference key="1">
    <citation type="journal article" date="2009" name="PLoS Genet.">
        <title>Organised genome dynamics in the Escherichia coli species results in highly diverse adaptive paths.</title>
        <authorList>
            <person name="Touchon M."/>
            <person name="Hoede C."/>
            <person name="Tenaillon O."/>
            <person name="Barbe V."/>
            <person name="Baeriswyl S."/>
            <person name="Bidet P."/>
            <person name="Bingen E."/>
            <person name="Bonacorsi S."/>
            <person name="Bouchier C."/>
            <person name="Bouvet O."/>
            <person name="Calteau A."/>
            <person name="Chiapello H."/>
            <person name="Clermont O."/>
            <person name="Cruveiller S."/>
            <person name="Danchin A."/>
            <person name="Diard M."/>
            <person name="Dossat C."/>
            <person name="Karoui M.E."/>
            <person name="Frapy E."/>
            <person name="Garry L."/>
            <person name="Ghigo J.M."/>
            <person name="Gilles A.M."/>
            <person name="Johnson J."/>
            <person name="Le Bouguenec C."/>
            <person name="Lescat M."/>
            <person name="Mangenot S."/>
            <person name="Martinez-Jehanne V."/>
            <person name="Matic I."/>
            <person name="Nassif X."/>
            <person name="Oztas S."/>
            <person name="Petit M.A."/>
            <person name="Pichon C."/>
            <person name="Rouy Z."/>
            <person name="Ruf C.S."/>
            <person name="Schneider D."/>
            <person name="Tourret J."/>
            <person name="Vacherie B."/>
            <person name="Vallenet D."/>
            <person name="Medigue C."/>
            <person name="Rocha E.P.C."/>
            <person name="Denamur E."/>
        </authorList>
    </citation>
    <scope>NUCLEOTIDE SEQUENCE [LARGE SCALE GENOMIC DNA]</scope>
    <source>
        <strain>ATCC 35469 / DSM 13698 / BCRC 15582 / CCUG 18766 / IAM 14443 / JCM 21226 / LMG 7866 / NBRC 102419 / NCTC 12128 / CDC 0568-73</strain>
    </source>
</reference>
<proteinExistence type="inferred from homology"/>
<sequence>MSQLTHINAAGEAHMVDVSAKAETVREARAEAFVTMRSETLAMIIDGRHHKGDVFATARIAGIQAAKRTWDLIPLCHPLMLSKVEVNLQAEPEHNRVRIETLCRLTGKTGVEMEALTAASVAALTIYDMCKAVQKDMVIGPVRLLAKSGGKSGDFKVEADD</sequence>
<organism>
    <name type="scientific">Escherichia fergusonii (strain ATCC 35469 / DSM 13698 / CCUG 18766 / IAM 14443 / JCM 21226 / LMG 7866 / NBRC 102419 / NCTC 12128 / CDC 0568-73)</name>
    <dbReference type="NCBI Taxonomy" id="585054"/>
    <lineage>
        <taxon>Bacteria</taxon>
        <taxon>Pseudomonadati</taxon>
        <taxon>Pseudomonadota</taxon>
        <taxon>Gammaproteobacteria</taxon>
        <taxon>Enterobacterales</taxon>
        <taxon>Enterobacteriaceae</taxon>
        <taxon>Escherichia</taxon>
    </lineage>
</organism>
<feature type="chain" id="PRO_1000139270" description="Cyclic pyranopterin monophosphate synthase">
    <location>
        <begin position="1"/>
        <end position="161"/>
    </location>
</feature>
<feature type="active site" evidence="1">
    <location>
        <position position="128"/>
    </location>
</feature>
<feature type="binding site" evidence="1">
    <location>
        <begin position="75"/>
        <end position="77"/>
    </location>
    <ligand>
        <name>substrate</name>
    </ligand>
</feature>
<feature type="binding site" evidence="1">
    <location>
        <begin position="113"/>
        <end position="114"/>
    </location>
    <ligand>
        <name>substrate</name>
    </ligand>
</feature>
<comment type="function">
    <text evidence="1">Catalyzes the conversion of (8S)-3',8-cyclo-7,8-dihydroguanosine 5'-triphosphate to cyclic pyranopterin monophosphate (cPMP).</text>
</comment>
<comment type="catalytic activity">
    <reaction evidence="1">
        <text>(8S)-3',8-cyclo-7,8-dihydroguanosine 5'-triphosphate = cyclic pyranopterin phosphate + diphosphate</text>
        <dbReference type="Rhea" id="RHEA:49580"/>
        <dbReference type="ChEBI" id="CHEBI:33019"/>
        <dbReference type="ChEBI" id="CHEBI:59648"/>
        <dbReference type="ChEBI" id="CHEBI:131766"/>
        <dbReference type="EC" id="4.6.1.17"/>
    </reaction>
</comment>
<comment type="pathway">
    <text evidence="1">Cofactor biosynthesis; molybdopterin biosynthesis.</text>
</comment>
<comment type="subunit">
    <text evidence="1">Homohexamer; trimer of dimers.</text>
</comment>
<comment type="similarity">
    <text evidence="1">Belongs to the MoaC family.</text>
</comment>
<gene>
    <name evidence="1" type="primary">moaC</name>
    <name type="ordered locus">EFER_2328</name>
</gene>
<accession>B7LJX9</accession>